<accession>Q6LHN7</accession>
<reference key="1">
    <citation type="journal article" date="2005" name="Science">
        <title>Life at depth: Photobacterium profundum genome sequence and expression analysis.</title>
        <authorList>
            <person name="Vezzi A."/>
            <person name="Campanaro S."/>
            <person name="D'Angelo M."/>
            <person name="Simonato F."/>
            <person name="Vitulo N."/>
            <person name="Lauro F.M."/>
            <person name="Cestaro A."/>
            <person name="Malacrida G."/>
            <person name="Simionati B."/>
            <person name="Cannata N."/>
            <person name="Romualdi C."/>
            <person name="Bartlett D.H."/>
            <person name="Valle G."/>
        </authorList>
    </citation>
    <scope>NUCLEOTIDE SEQUENCE [LARGE SCALE GENOMIC DNA]</scope>
    <source>
        <strain>ATCC BAA-1253 / SS9</strain>
    </source>
</reference>
<name>GLYA2_PHOPR</name>
<protein>
    <recommendedName>
        <fullName evidence="1">Serine hydroxymethyltransferase 2</fullName>
        <shortName evidence="1">SHMT 2</shortName>
        <shortName evidence="1">Serine methylase 2</shortName>
        <ecNumber evidence="1">2.1.2.1</ecNumber>
    </recommendedName>
</protein>
<dbReference type="EC" id="2.1.2.1" evidence="1"/>
<dbReference type="EMBL" id="CR378679">
    <property type="protein sequence ID" value="CAG23193.1"/>
    <property type="molecule type" value="Genomic_DNA"/>
</dbReference>
<dbReference type="RefSeq" id="WP_011221374.1">
    <property type="nucleotide sequence ID" value="NC_006371.1"/>
</dbReference>
<dbReference type="SMR" id="Q6LHN7"/>
<dbReference type="STRING" id="298386.PBPRB1322"/>
<dbReference type="KEGG" id="ppr:PBPRB1322"/>
<dbReference type="eggNOG" id="COG0112">
    <property type="taxonomic scope" value="Bacteria"/>
</dbReference>
<dbReference type="HOGENOM" id="CLU_022477_2_1_6"/>
<dbReference type="UniPathway" id="UPA00193"/>
<dbReference type="UniPathway" id="UPA00288">
    <property type="reaction ID" value="UER01023"/>
</dbReference>
<dbReference type="Proteomes" id="UP000000593">
    <property type="component" value="Chromosome 2"/>
</dbReference>
<dbReference type="GO" id="GO:0005829">
    <property type="term" value="C:cytosol"/>
    <property type="evidence" value="ECO:0007669"/>
    <property type="project" value="TreeGrafter"/>
</dbReference>
<dbReference type="GO" id="GO:0004372">
    <property type="term" value="F:glycine hydroxymethyltransferase activity"/>
    <property type="evidence" value="ECO:0007669"/>
    <property type="project" value="UniProtKB-UniRule"/>
</dbReference>
<dbReference type="GO" id="GO:0030170">
    <property type="term" value="F:pyridoxal phosphate binding"/>
    <property type="evidence" value="ECO:0007669"/>
    <property type="project" value="UniProtKB-UniRule"/>
</dbReference>
<dbReference type="GO" id="GO:0019264">
    <property type="term" value="P:glycine biosynthetic process from serine"/>
    <property type="evidence" value="ECO:0007669"/>
    <property type="project" value="UniProtKB-UniRule"/>
</dbReference>
<dbReference type="GO" id="GO:0035999">
    <property type="term" value="P:tetrahydrofolate interconversion"/>
    <property type="evidence" value="ECO:0007669"/>
    <property type="project" value="UniProtKB-UniRule"/>
</dbReference>
<dbReference type="CDD" id="cd00378">
    <property type="entry name" value="SHMT"/>
    <property type="match status" value="1"/>
</dbReference>
<dbReference type="FunFam" id="3.40.640.10:FF:000001">
    <property type="entry name" value="Serine hydroxymethyltransferase"/>
    <property type="match status" value="1"/>
</dbReference>
<dbReference type="FunFam" id="3.90.1150.10:FF:000003">
    <property type="entry name" value="Serine hydroxymethyltransferase"/>
    <property type="match status" value="1"/>
</dbReference>
<dbReference type="Gene3D" id="3.90.1150.10">
    <property type="entry name" value="Aspartate Aminotransferase, domain 1"/>
    <property type="match status" value="1"/>
</dbReference>
<dbReference type="Gene3D" id="3.40.640.10">
    <property type="entry name" value="Type I PLP-dependent aspartate aminotransferase-like (Major domain)"/>
    <property type="match status" value="1"/>
</dbReference>
<dbReference type="HAMAP" id="MF_00051">
    <property type="entry name" value="SHMT"/>
    <property type="match status" value="1"/>
</dbReference>
<dbReference type="InterPro" id="IPR015424">
    <property type="entry name" value="PyrdxlP-dep_Trfase"/>
</dbReference>
<dbReference type="InterPro" id="IPR015421">
    <property type="entry name" value="PyrdxlP-dep_Trfase_major"/>
</dbReference>
<dbReference type="InterPro" id="IPR015422">
    <property type="entry name" value="PyrdxlP-dep_Trfase_small"/>
</dbReference>
<dbReference type="InterPro" id="IPR001085">
    <property type="entry name" value="Ser_HO-MeTrfase"/>
</dbReference>
<dbReference type="InterPro" id="IPR049943">
    <property type="entry name" value="Ser_HO-MeTrfase-like"/>
</dbReference>
<dbReference type="InterPro" id="IPR019798">
    <property type="entry name" value="Ser_HO-MeTrfase_PLP_BS"/>
</dbReference>
<dbReference type="InterPro" id="IPR039429">
    <property type="entry name" value="SHMT-like_dom"/>
</dbReference>
<dbReference type="NCBIfam" id="NF000586">
    <property type="entry name" value="PRK00011.1"/>
    <property type="match status" value="1"/>
</dbReference>
<dbReference type="PANTHER" id="PTHR11680">
    <property type="entry name" value="SERINE HYDROXYMETHYLTRANSFERASE"/>
    <property type="match status" value="1"/>
</dbReference>
<dbReference type="PANTHER" id="PTHR11680:SF35">
    <property type="entry name" value="SERINE HYDROXYMETHYLTRANSFERASE 1"/>
    <property type="match status" value="1"/>
</dbReference>
<dbReference type="Pfam" id="PF00464">
    <property type="entry name" value="SHMT"/>
    <property type="match status" value="1"/>
</dbReference>
<dbReference type="PIRSF" id="PIRSF000412">
    <property type="entry name" value="SHMT"/>
    <property type="match status" value="1"/>
</dbReference>
<dbReference type="SUPFAM" id="SSF53383">
    <property type="entry name" value="PLP-dependent transferases"/>
    <property type="match status" value="1"/>
</dbReference>
<dbReference type="PROSITE" id="PS00096">
    <property type="entry name" value="SHMT"/>
    <property type="match status" value="1"/>
</dbReference>
<organism>
    <name type="scientific">Photobacterium profundum (strain SS9)</name>
    <dbReference type="NCBI Taxonomy" id="298386"/>
    <lineage>
        <taxon>Bacteria</taxon>
        <taxon>Pseudomonadati</taxon>
        <taxon>Pseudomonadota</taxon>
        <taxon>Gammaproteobacteria</taxon>
        <taxon>Vibrionales</taxon>
        <taxon>Vibrionaceae</taxon>
        <taxon>Photobacterium</taxon>
    </lineage>
</organism>
<gene>
    <name evidence="1" type="primary">glyA2</name>
    <name type="ordered locus">PBPRB1322</name>
</gene>
<evidence type="ECO:0000255" key="1">
    <source>
        <dbReference type="HAMAP-Rule" id="MF_00051"/>
    </source>
</evidence>
<comment type="function">
    <text evidence="1">Catalyzes the reversible interconversion of serine and glycine with tetrahydrofolate (THF) serving as the one-carbon carrier. This reaction serves as the major source of one-carbon groups required for the biosynthesis of purines, thymidylate, methionine, and other important biomolecules. Also exhibits THF-independent aldolase activity toward beta-hydroxyamino acids, producing glycine and aldehydes, via a retro-aldol mechanism.</text>
</comment>
<comment type="catalytic activity">
    <reaction evidence="1">
        <text>(6R)-5,10-methylene-5,6,7,8-tetrahydrofolate + glycine + H2O = (6S)-5,6,7,8-tetrahydrofolate + L-serine</text>
        <dbReference type="Rhea" id="RHEA:15481"/>
        <dbReference type="ChEBI" id="CHEBI:15377"/>
        <dbReference type="ChEBI" id="CHEBI:15636"/>
        <dbReference type="ChEBI" id="CHEBI:33384"/>
        <dbReference type="ChEBI" id="CHEBI:57305"/>
        <dbReference type="ChEBI" id="CHEBI:57453"/>
        <dbReference type="EC" id="2.1.2.1"/>
    </reaction>
</comment>
<comment type="cofactor">
    <cofactor evidence="1">
        <name>pyridoxal 5'-phosphate</name>
        <dbReference type="ChEBI" id="CHEBI:597326"/>
    </cofactor>
</comment>
<comment type="pathway">
    <text evidence="1">One-carbon metabolism; tetrahydrofolate interconversion.</text>
</comment>
<comment type="pathway">
    <text evidence="1">Amino-acid biosynthesis; glycine biosynthesis; glycine from L-serine: step 1/1.</text>
</comment>
<comment type="subunit">
    <text evidence="1">Homodimer.</text>
</comment>
<comment type="subcellular location">
    <subcellularLocation>
        <location evidence="1">Cytoplasm</location>
    </subcellularLocation>
</comment>
<comment type="similarity">
    <text evidence="1">Belongs to the SHMT family.</text>
</comment>
<sequence length="431" mass="46611">MKASYQNHDLEMFFSTNLAQVDGAVNAGIEAELNRQNQQIELIASENIVSKAVMQAQGTCLTNKYAEGYAGHRYYGGCEHVDEVEKIAIARAKQLFQCEYVNVQPHSGAQANGAVMLALLQPGDTILGMSLDAGGHLTHGARPALSGKWFDAVQYGVNKDTLEIDYNQVRELAIEHKPKMIIAGGSAIPRIINFAKFREIADEVGAFLMVDMAHIAGLIAAGEHPSPIPHAHVITTTTHKTLRGPRGGMILTNLEDINKKINSAVFPGLQGGPLMHVIAGKAVAFGEALEPDFKIYIKNVISNAKVLAEVLQNRGCDIVTNGTDTHLMLVDLRPKGLKGNAAENALERAGITCNKNGIPFDTEKPMVTSGIRLGTPAGTSRGFGNDEFKQIGEWIGDVLDGLAANPEDNSEVEKHVKQQVQKLCSRFPLYQ</sequence>
<feature type="chain" id="PRO_0000113632" description="Serine hydroxymethyltransferase 2">
    <location>
        <begin position="1"/>
        <end position="431"/>
    </location>
</feature>
<feature type="binding site" evidence="1">
    <location>
        <position position="131"/>
    </location>
    <ligand>
        <name>(6S)-5,6,7,8-tetrahydrofolate</name>
        <dbReference type="ChEBI" id="CHEBI:57453"/>
    </ligand>
</feature>
<feature type="binding site" evidence="1">
    <location>
        <begin position="135"/>
        <end position="137"/>
    </location>
    <ligand>
        <name>(6S)-5,6,7,8-tetrahydrofolate</name>
        <dbReference type="ChEBI" id="CHEBI:57453"/>
    </ligand>
</feature>
<feature type="site" description="Plays an important role in substrate specificity" evidence="1">
    <location>
        <position position="239"/>
    </location>
</feature>
<feature type="modified residue" description="N6-(pyridoxal phosphate)lysine" evidence="1">
    <location>
        <position position="240"/>
    </location>
</feature>
<proteinExistence type="inferred from homology"/>
<keyword id="KW-0028">Amino-acid biosynthesis</keyword>
<keyword id="KW-0963">Cytoplasm</keyword>
<keyword id="KW-0554">One-carbon metabolism</keyword>
<keyword id="KW-0663">Pyridoxal phosphate</keyword>
<keyword id="KW-1185">Reference proteome</keyword>
<keyword id="KW-0808">Transferase</keyword>